<reference key="1">
    <citation type="journal article" date="2000" name="Genetics">
        <title>Genetic analysis of the Drosophila DNAprim gene. The function of the 60-kd primase subunit of DNA polymerase opposes the fat facets signaling pathway in the developing eye.</title>
        <authorList>
            <person name="Chen X."/>
            <person name="Li Q."/>
            <person name="Fischer J.A."/>
        </authorList>
    </citation>
    <scope>NUCLEOTIDE SEQUENCE [GENOMIC DNA]</scope>
    <scope>FUNCTION</scope>
    <scope>MUTAGENESIS OF GLU-136</scope>
    <scope>DISRUPTION PHENOTYPE</scope>
</reference>
<reference key="2">
    <citation type="journal article" date="2000" name="Science">
        <title>The genome sequence of Drosophila melanogaster.</title>
        <authorList>
            <person name="Adams M.D."/>
            <person name="Celniker S.E."/>
            <person name="Holt R.A."/>
            <person name="Evans C.A."/>
            <person name="Gocayne J.D."/>
            <person name="Amanatides P.G."/>
            <person name="Scherer S.E."/>
            <person name="Li P.W."/>
            <person name="Hoskins R.A."/>
            <person name="Galle R.F."/>
            <person name="George R.A."/>
            <person name="Lewis S.E."/>
            <person name="Richards S."/>
            <person name="Ashburner M."/>
            <person name="Henderson S.N."/>
            <person name="Sutton G.G."/>
            <person name="Wortman J.R."/>
            <person name="Yandell M.D."/>
            <person name="Zhang Q."/>
            <person name="Chen L.X."/>
            <person name="Brandon R.C."/>
            <person name="Rogers Y.-H.C."/>
            <person name="Blazej R.G."/>
            <person name="Champe M."/>
            <person name="Pfeiffer B.D."/>
            <person name="Wan K.H."/>
            <person name="Doyle C."/>
            <person name="Baxter E.G."/>
            <person name="Helt G."/>
            <person name="Nelson C.R."/>
            <person name="Miklos G.L.G."/>
            <person name="Abril J.F."/>
            <person name="Agbayani A."/>
            <person name="An H.-J."/>
            <person name="Andrews-Pfannkoch C."/>
            <person name="Baldwin D."/>
            <person name="Ballew R.M."/>
            <person name="Basu A."/>
            <person name="Baxendale J."/>
            <person name="Bayraktaroglu L."/>
            <person name="Beasley E.M."/>
            <person name="Beeson K.Y."/>
            <person name="Benos P.V."/>
            <person name="Berman B.P."/>
            <person name="Bhandari D."/>
            <person name="Bolshakov S."/>
            <person name="Borkova D."/>
            <person name="Botchan M.R."/>
            <person name="Bouck J."/>
            <person name="Brokstein P."/>
            <person name="Brottier P."/>
            <person name="Burtis K.C."/>
            <person name="Busam D.A."/>
            <person name="Butler H."/>
            <person name="Cadieu E."/>
            <person name="Center A."/>
            <person name="Chandra I."/>
            <person name="Cherry J.M."/>
            <person name="Cawley S."/>
            <person name="Dahlke C."/>
            <person name="Davenport L.B."/>
            <person name="Davies P."/>
            <person name="de Pablos B."/>
            <person name="Delcher A."/>
            <person name="Deng Z."/>
            <person name="Mays A.D."/>
            <person name="Dew I."/>
            <person name="Dietz S.M."/>
            <person name="Dodson K."/>
            <person name="Doup L.E."/>
            <person name="Downes M."/>
            <person name="Dugan-Rocha S."/>
            <person name="Dunkov B.C."/>
            <person name="Dunn P."/>
            <person name="Durbin K.J."/>
            <person name="Evangelista C.C."/>
            <person name="Ferraz C."/>
            <person name="Ferriera S."/>
            <person name="Fleischmann W."/>
            <person name="Fosler C."/>
            <person name="Gabrielian A.E."/>
            <person name="Garg N.S."/>
            <person name="Gelbart W.M."/>
            <person name="Glasser K."/>
            <person name="Glodek A."/>
            <person name="Gong F."/>
            <person name="Gorrell J.H."/>
            <person name="Gu Z."/>
            <person name="Guan P."/>
            <person name="Harris M."/>
            <person name="Harris N.L."/>
            <person name="Harvey D.A."/>
            <person name="Heiman T.J."/>
            <person name="Hernandez J.R."/>
            <person name="Houck J."/>
            <person name="Hostin D."/>
            <person name="Houston K.A."/>
            <person name="Howland T.J."/>
            <person name="Wei M.-H."/>
            <person name="Ibegwam C."/>
            <person name="Jalali M."/>
            <person name="Kalush F."/>
            <person name="Karpen G.H."/>
            <person name="Ke Z."/>
            <person name="Kennison J.A."/>
            <person name="Ketchum K.A."/>
            <person name="Kimmel B.E."/>
            <person name="Kodira C.D."/>
            <person name="Kraft C.L."/>
            <person name="Kravitz S."/>
            <person name="Kulp D."/>
            <person name="Lai Z."/>
            <person name="Lasko P."/>
            <person name="Lei Y."/>
            <person name="Levitsky A.A."/>
            <person name="Li J.H."/>
            <person name="Li Z."/>
            <person name="Liang Y."/>
            <person name="Lin X."/>
            <person name="Liu X."/>
            <person name="Mattei B."/>
            <person name="McIntosh T.C."/>
            <person name="McLeod M.P."/>
            <person name="McPherson D."/>
            <person name="Merkulov G."/>
            <person name="Milshina N.V."/>
            <person name="Mobarry C."/>
            <person name="Morris J."/>
            <person name="Moshrefi A."/>
            <person name="Mount S.M."/>
            <person name="Moy M."/>
            <person name="Murphy B."/>
            <person name="Murphy L."/>
            <person name="Muzny D.M."/>
            <person name="Nelson D.L."/>
            <person name="Nelson D.R."/>
            <person name="Nelson K.A."/>
            <person name="Nixon K."/>
            <person name="Nusskern D.R."/>
            <person name="Pacleb J.M."/>
            <person name="Palazzolo M."/>
            <person name="Pittman G.S."/>
            <person name="Pan S."/>
            <person name="Pollard J."/>
            <person name="Puri V."/>
            <person name="Reese M.G."/>
            <person name="Reinert K."/>
            <person name="Remington K."/>
            <person name="Saunders R.D.C."/>
            <person name="Scheeler F."/>
            <person name="Shen H."/>
            <person name="Shue B.C."/>
            <person name="Siden-Kiamos I."/>
            <person name="Simpson M."/>
            <person name="Skupski M.P."/>
            <person name="Smith T.J."/>
            <person name="Spier E."/>
            <person name="Spradling A.C."/>
            <person name="Stapleton M."/>
            <person name="Strong R."/>
            <person name="Sun E."/>
            <person name="Svirskas R."/>
            <person name="Tector C."/>
            <person name="Turner R."/>
            <person name="Venter E."/>
            <person name="Wang A.H."/>
            <person name="Wang X."/>
            <person name="Wang Z.-Y."/>
            <person name="Wassarman D.A."/>
            <person name="Weinstock G.M."/>
            <person name="Weissenbach J."/>
            <person name="Williams S.M."/>
            <person name="Woodage T."/>
            <person name="Worley K.C."/>
            <person name="Wu D."/>
            <person name="Yang S."/>
            <person name="Yao Q.A."/>
            <person name="Ye J."/>
            <person name="Yeh R.-F."/>
            <person name="Zaveri J.S."/>
            <person name="Zhan M."/>
            <person name="Zhang G."/>
            <person name="Zhao Q."/>
            <person name="Zheng L."/>
            <person name="Zheng X.H."/>
            <person name="Zhong F.N."/>
            <person name="Zhong W."/>
            <person name="Zhou X."/>
            <person name="Zhu S.C."/>
            <person name="Zhu X."/>
            <person name="Smith H.O."/>
            <person name="Gibbs R.A."/>
            <person name="Myers E.W."/>
            <person name="Rubin G.M."/>
            <person name="Venter J.C."/>
        </authorList>
    </citation>
    <scope>NUCLEOTIDE SEQUENCE [LARGE SCALE GENOMIC DNA]</scope>
    <source>
        <strain>Berkeley</strain>
    </source>
</reference>
<reference key="3">
    <citation type="journal article" date="2002" name="Genome Biol.">
        <title>Annotation of the Drosophila melanogaster euchromatic genome: a systematic review.</title>
        <authorList>
            <person name="Misra S."/>
            <person name="Crosby M.A."/>
            <person name="Mungall C.J."/>
            <person name="Matthews B.B."/>
            <person name="Campbell K.S."/>
            <person name="Hradecky P."/>
            <person name="Huang Y."/>
            <person name="Kaminker J.S."/>
            <person name="Millburn G.H."/>
            <person name="Prochnik S.E."/>
            <person name="Smith C.D."/>
            <person name="Tupy J.L."/>
            <person name="Whitfield E.J."/>
            <person name="Bayraktaroglu L."/>
            <person name="Berman B.P."/>
            <person name="Bettencourt B.R."/>
            <person name="Celniker S.E."/>
            <person name="de Grey A.D.N.J."/>
            <person name="Drysdale R.A."/>
            <person name="Harris N.L."/>
            <person name="Richter J."/>
            <person name="Russo S."/>
            <person name="Schroeder A.J."/>
            <person name="Shu S.Q."/>
            <person name="Stapleton M."/>
            <person name="Yamada C."/>
            <person name="Ashburner M."/>
            <person name="Gelbart W.M."/>
            <person name="Rubin G.M."/>
            <person name="Lewis S.E."/>
        </authorList>
    </citation>
    <scope>GENOME REANNOTATION</scope>
    <source>
        <strain>Berkeley</strain>
    </source>
</reference>
<reference key="4">
    <citation type="journal article" date="2000" name="Science">
        <title>A Drosophila complementary DNA resource.</title>
        <authorList>
            <person name="Rubin G.M."/>
            <person name="Hong L."/>
            <person name="Brokstein P."/>
            <person name="Evans-Holm M."/>
            <person name="Frise E."/>
            <person name="Stapleton M."/>
            <person name="Harvey D.A."/>
        </authorList>
    </citation>
    <scope>NUCLEOTIDE SEQUENCE [LARGE SCALE MRNA]</scope>
    <source>
        <strain>Berkeley</strain>
        <tissue>Ovary</tissue>
    </source>
</reference>
<reference key="5">
    <citation type="journal article" date="1980" name="J. Biol. Chem.">
        <title>DNA polymerase alpha from Drosophila melanogaster embryos. Subunit structure.</title>
        <authorList>
            <person name="Villani G."/>
            <person name="Sauer B."/>
            <person name="Lehman I.R."/>
        </authorList>
    </citation>
    <scope>FUNCTION</scope>
    <scope>IDENTIFICATION IN THE DNA POLYMERASE ALPHA COMPLEX</scope>
    <scope>TISSUE SPECIFICITY</scope>
</reference>
<reference key="6">
    <citation type="journal article" date="1982" name="Proc. Natl. Acad. Sci. U.S.A.">
        <title>Synthesis by the DNA primase of Drosophila melanogaster of a primer with a unique chain length.</title>
        <authorList>
            <person name="Conaway R.C."/>
            <person name="Lehman I.R."/>
        </authorList>
    </citation>
    <scope>FUNCTION</scope>
</reference>
<reference key="7">
    <citation type="journal article" date="1983" name="Proc. Natl. Acad. Sci. U.S.A.">
        <title>Isolation of an intact DNA polymerase-primase from embryos of Drosophila melanogaster.</title>
        <authorList>
            <person name="Kaguni L.S."/>
            <person name="Rossignol J.M."/>
            <person name="Conaway R.C."/>
            <person name="Lehman I.R."/>
        </authorList>
    </citation>
    <scope>FUNCTION</scope>
    <scope>IDENTIFICATION IN ALPHA DNA POLYMERASE COMPLEX</scope>
    <scope>IDENTIFICATION IN DNA PRIMASE COMPLEX</scope>
    <scope>TISSUE SPECIFICITY</scope>
</reference>
<reference key="8">
    <citation type="journal article" date="1983" name="J. Biol. Chem.">
        <title>Association of DNA primase with the beta/gamma subunits of DNA polymerase alpha from Drosophila melanogaster embryos.</title>
        <authorList>
            <person name="Kaguni L.S."/>
            <person name="Rossignol J.M."/>
            <person name="Conaway R.C."/>
            <person name="Banks G.R."/>
            <person name="Lehman I.R."/>
        </authorList>
    </citation>
    <scope>FUNCTION</scope>
    <scope>IDENTIFICATION IN ALPHA DNA POLYMERASE COMPLEX</scope>
    <scope>IDENTIFICATION IN DNA PRIMASE COMPLEX</scope>
    <scope>TISSUE SPECIFICITY</scope>
</reference>
<reference key="9">
    <citation type="journal article" date="1999" name="Biochim. Biophys. Acta">
        <title>Cloning and characterisation of the gene for the large subunit of the DNA primase from Drosophila melanogaster.</title>
        <authorList>
            <person name="Huikeshoven H."/>
            <person name="Cotterill S."/>
        </authorList>
    </citation>
    <scope>DEVELOPMENTAL STAGE</scope>
</reference>
<name>PRI2_DROME</name>
<comment type="function">
    <text evidence="1 2 7 8 9 10">Regulatory subunit of the DNA primase complex and component of the DNA polymerase alpha complex (also known as the alpha DNA polymerase-primase complex) which play an essential role in the initiation of DNA synthesis (PubMed:6403945, PubMed:6409898, PubMed:6773966). During the S phase of the cell cycle, the DNA polymerase alpha complex (composed of a catalytic subunit PolA1, an accessory subunit PolA2 and two primase subunits, the catalytic subunit Prim1 and the regulatory subunit Prim2) is recruited to DNA at the replicative forks (By similarity). The primase subunit of the polymerase alpha complex initiates DNA synthesis by oligomerising short RNA primers on both leading and lagging strands (PubMed:6812052). These primers are initially extended by the polymerase alpha catalytic subunit and subsequently transferred to polymerase delta and polymerase epsilon for processive synthesis on the lagging and leading strand, respectively (By similarity). In the primase complex, both subunits are necessary for the initial di-nucleotide formation, but the extension of the primer depends only on the catalytic subunit (PubMed:6812052). Stabilizes and modulates the activity of the catalytic subunit (By similarity).</text>
</comment>
<comment type="cofactor">
    <cofactor evidence="3">
        <name>[4Fe-4S] cluster</name>
        <dbReference type="ChEBI" id="CHEBI:49883"/>
    </cofactor>
    <text evidence="3">Binds 1 [4Fe-4S] cluster.</text>
</comment>
<comment type="subunit">
    <text evidence="7 8 9">Heterodimer of a catalytic subunit Prim1 and a regulatory subunit Prim2, also known as the DNA primase complex (PubMed:6403945, PubMed:6409898). Component of the alpha DNA polymerase complex (also known as the alpha DNA polymerase-primase complex) consisting of four subunits: the catalytic subunit PolA1, the regulatory subunit PolA2, and the primase complex subunits Prim1 and Prim2 respectively (PubMed:6403945, PubMed:6409898, PubMed:6773966). PolA1 associates with the DNA primase complex before association with PolA2 (PubMed:6409898).</text>
</comment>
<comment type="tissue specificity">
    <text evidence="7 8 9">Expressed in embryos (at protein level).</text>
</comment>
<comment type="developmental stage">
    <text evidence="5">Expressed at high levels in early embryos (particularly at the 0-4 hour stage), then low throughout the larval and pupal stages and in adult males (PubMed:10366721). Shows elevated levels in adult females (PubMed:10366721).</text>
</comment>
<comment type="disruption phenotype">
    <text evidence="6">Mutants exhibit eye defects and a delay in the S- phase of the cell cycle.</text>
</comment>
<comment type="similarity">
    <text evidence="13">Belongs to the eukaryotic-type primase large subunit family.</text>
</comment>
<gene>
    <name evidence="14" type="primary">Prim2</name>
    <name evidence="14" type="synonym">DNApol-alpha60</name>
    <name evidence="14" type="synonym">DNAprim</name>
    <name evidence="11" type="synonym">S(faf)240</name>
    <name evidence="14" type="ORF">CG5553</name>
</gene>
<proteinExistence type="evidence at protein level"/>
<keyword id="KW-0004">4Fe-4S</keyword>
<keyword id="KW-0235">DNA replication</keyword>
<keyword id="KW-0238">DNA-binding</keyword>
<keyword id="KW-0408">Iron</keyword>
<keyword id="KW-0411">Iron-sulfur</keyword>
<keyword id="KW-0479">Metal-binding</keyword>
<keyword id="KW-0639">Primosome</keyword>
<keyword id="KW-1185">Reference proteome</keyword>
<dbReference type="EMBL" id="AF291873">
    <property type="protein sequence ID" value="AAG01548.1"/>
    <property type="molecule type" value="Genomic_DNA"/>
</dbReference>
<dbReference type="EMBL" id="AE014296">
    <property type="protein sequence ID" value="AAF51580.2"/>
    <property type="molecule type" value="Genomic_DNA"/>
</dbReference>
<dbReference type="EMBL" id="AF160895">
    <property type="protein sequence ID" value="AAD46835.1"/>
    <property type="molecule type" value="mRNA"/>
</dbReference>
<dbReference type="RefSeq" id="NP_652001.2">
    <property type="nucleotide sequence ID" value="NM_143744.4"/>
</dbReference>
<dbReference type="SMR" id="Q9VPH2"/>
<dbReference type="BioGRID" id="69380">
    <property type="interactions" value="13"/>
</dbReference>
<dbReference type="ComplexPortal" id="CPX-2090">
    <property type="entry name" value="DNA polymerase alpha:primase complex"/>
</dbReference>
<dbReference type="FunCoup" id="Q9VPH2">
    <property type="interactions" value="1385"/>
</dbReference>
<dbReference type="IntAct" id="Q9VPH2">
    <property type="interactions" value="9"/>
</dbReference>
<dbReference type="STRING" id="7227.FBpp0077899"/>
<dbReference type="PaxDb" id="7227-FBpp0077899"/>
<dbReference type="DNASU" id="44915"/>
<dbReference type="EnsemblMetazoa" id="FBtr0078241">
    <property type="protein sequence ID" value="FBpp0077899"/>
    <property type="gene ID" value="FBgn0259676"/>
</dbReference>
<dbReference type="GeneID" id="44915"/>
<dbReference type="KEGG" id="dme:Dmel_CG5553"/>
<dbReference type="AGR" id="FB:FBgn0259676"/>
<dbReference type="CTD" id="5558"/>
<dbReference type="FlyBase" id="FBgn0259676">
    <property type="gene designation" value="Prim2"/>
</dbReference>
<dbReference type="VEuPathDB" id="VectorBase:FBgn0259676"/>
<dbReference type="eggNOG" id="KOG2267">
    <property type="taxonomic scope" value="Eukaryota"/>
</dbReference>
<dbReference type="GeneTree" id="ENSGT00390000009790"/>
<dbReference type="HOGENOM" id="CLU_026253_2_0_1"/>
<dbReference type="InParanoid" id="Q9VPH2"/>
<dbReference type="OMA" id="RINYKPW"/>
<dbReference type="OrthoDB" id="421393at2759"/>
<dbReference type="PhylomeDB" id="Q9VPH2"/>
<dbReference type="Reactome" id="R-DME-113501">
    <property type="pathway name" value="Inhibition of replication initiation of damaged DNA by RB1/E2F1"/>
</dbReference>
<dbReference type="Reactome" id="R-DME-68952">
    <property type="pathway name" value="DNA replication initiation"/>
</dbReference>
<dbReference type="Reactome" id="R-DME-68962">
    <property type="pathway name" value="Activation of the pre-replicative complex"/>
</dbReference>
<dbReference type="Reactome" id="R-DME-69091">
    <property type="pathway name" value="Polymerase switching"/>
</dbReference>
<dbReference type="Reactome" id="R-DME-69166">
    <property type="pathway name" value="Removal of the Flap Intermediate"/>
</dbReference>
<dbReference type="Reactome" id="R-DME-69183">
    <property type="pathway name" value="Processive synthesis on the lagging strand"/>
</dbReference>
<dbReference type="BioGRID-ORCS" id="44915">
    <property type="hits" value="1 hit in 1 CRISPR screen"/>
</dbReference>
<dbReference type="GenomeRNAi" id="44915"/>
<dbReference type="PRO" id="PR:Q9VPH2"/>
<dbReference type="Proteomes" id="UP000000803">
    <property type="component" value="Chromosome 3L"/>
</dbReference>
<dbReference type="Bgee" id="FBgn0259676">
    <property type="expression patterns" value="Expressed in secondary oocyte and 15 other cell types or tissues"/>
</dbReference>
<dbReference type="ExpressionAtlas" id="Q9VPH2">
    <property type="expression patterns" value="baseline and differential"/>
</dbReference>
<dbReference type="GO" id="GO:0005658">
    <property type="term" value="C:alpha DNA polymerase:primase complex"/>
    <property type="evidence" value="ECO:0000314"/>
    <property type="project" value="FlyBase"/>
</dbReference>
<dbReference type="GO" id="GO:0051539">
    <property type="term" value="F:4 iron, 4 sulfur cluster binding"/>
    <property type="evidence" value="ECO:0007669"/>
    <property type="project" value="UniProtKB-KW"/>
</dbReference>
<dbReference type="GO" id="GO:0003677">
    <property type="term" value="F:DNA binding"/>
    <property type="evidence" value="ECO:0007669"/>
    <property type="project" value="UniProtKB-KW"/>
</dbReference>
<dbReference type="GO" id="GO:0046872">
    <property type="term" value="F:metal ion binding"/>
    <property type="evidence" value="ECO:0007669"/>
    <property type="project" value="UniProtKB-KW"/>
</dbReference>
<dbReference type="GO" id="GO:0001745">
    <property type="term" value="P:compound eye morphogenesis"/>
    <property type="evidence" value="ECO:0000315"/>
    <property type="project" value="UniProtKB"/>
</dbReference>
<dbReference type="GO" id="GO:0006260">
    <property type="term" value="P:DNA replication"/>
    <property type="evidence" value="ECO:0000315"/>
    <property type="project" value="UniProtKB"/>
</dbReference>
<dbReference type="GO" id="GO:0006270">
    <property type="term" value="P:DNA replication initiation"/>
    <property type="evidence" value="ECO:0000314"/>
    <property type="project" value="ComplexPortal"/>
</dbReference>
<dbReference type="GO" id="GO:0006269">
    <property type="term" value="P:DNA replication, synthesis of primer"/>
    <property type="evidence" value="ECO:0000314"/>
    <property type="project" value="FlyBase"/>
</dbReference>
<dbReference type="GO" id="GO:0006261">
    <property type="term" value="P:DNA-templated DNA replication"/>
    <property type="evidence" value="ECO:0000314"/>
    <property type="project" value="FlyBase"/>
</dbReference>
<dbReference type="GO" id="GO:0000278">
    <property type="term" value="P:mitotic cell cycle"/>
    <property type="evidence" value="ECO:0000315"/>
    <property type="project" value="UniProtKB"/>
</dbReference>
<dbReference type="CDD" id="cd07322">
    <property type="entry name" value="PriL_PriS_Eukaryotic"/>
    <property type="match status" value="1"/>
</dbReference>
<dbReference type="FunFam" id="1.20.930.80:FF:000001">
    <property type="entry name" value="DNA primase large subunit"/>
    <property type="match status" value="1"/>
</dbReference>
<dbReference type="Gene3D" id="1.20.930.80">
    <property type="match status" value="1"/>
</dbReference>
<dbReference type="InterPro" id="IPR016558">
    <property type="entry name" value="DNA_primase_lsu_euk"/>
</dbReference>
<dbReference type="InterPro" id="IPR007238">
    <property type="entry name" value="DNA_primase_lsu_euk/arc"/>
</dbReference>
<dbReference type="PANTHER" id="PTHR10537">
    <property type="entry name" value="DNA PRIMASE LARGE SUBUNIT"/>
    <property type="match status" value="1"/>
</dbReference>
<dbReference type="PANTHER" id="PTHR10537:SF3">
    <property type="entry name" value="DNA PRIMASE LARGE SUBUNIT"/>
    <property type="match status" value="1"/>
</dbReference>
<dbReference type="Pfam" id="PF04104">
    <property type="entry name" value="DNA_primase_lrg"/>
    <property type="match status" value="1"/>
</dbReference>
<dbReference type="PIRSF" id="PIRSF009449">
    <property type="entry name" value="DNA_primase_large_subunit"/>
    <property type="match status" value="1"/>
</dbReference>
<evidence type="ECO:0000250" key="1">
    <source>
        <dbReference type="UniProtKB" id="P09884"/>
    </source>
</evidence>
<evidence type="ECO:0000250" key="2">
    <source>
        <dbReference type="UniProtKB" id="P33610"/>
    </source>
</evidence>
<evidence type="ECO:0000250" key="3">
    <source>
        <dbReference type="UniProtKB" id="P49643"/>
    </source>
</evidence>
<evidence type="ECO:0000256" key="4">
    <source>
        <dbReference type="SAM" id="MobiDB-lite"/>
    </source>
</evidence>
<evidence type="ECO:0000269" key="5">
    <source>
    </source>
</evidence>
<evidence type="ECO:0000269" key="6">
    <source>
    </source>
</evidence>
<evidence type="ECO:0000269" key="7">
    <source>
    </source>
</evidence>
<evidence type="ECO:0000269" key="8">
    <source>
    </source>
</evidence>
<evidence type="ECO:0000269" key="9">
    <source>
    </source>
</evidence>
<evidence type="ECO:0000269" key="10">
    <source>
    </source>
</evidence>
<evidence type="ECO:0000303" key="11">
    <source>
    </source>
</evidence>
<evidence type="ECO:0000303" key="12">
    <source>
    </source>
</evidence>
<evidence type="ECO:0000305" key="13"/>
<evidence type="ECO:0000312" key="14">
    <source>
        <dbReference type="FlyBase" id="FBgn0259676"/>
    </source>
</evidence>
<organism>
    <name type="scientific">Drosophila melanogaster</name>
    <name type="common">Fruit fly</name>
    <dbReference type="NCBI Taxonomy" id="7227"/>
    <lineage>
        <taxon>Eukaryota</taxon>
        <taxon>Metazoa</taxon>
        <taxon>Ecdysozoa</taxon>
        <taxon>Arthropoda</taxon>
        <taxon>Hexapoda</taxon>
        <taxon>Insecta</taxon>
        <taxon>Pterygota</taxon>
        <taxon>Neoptera</taxon>
        <taxon>Endopterygota</taxon>
        <taxon>Diptera</taxon>
        <taxon>Brachycera</taxon>
        <taxon>Muscomorpha</taxon>
        <taxon>Ephydroidea</taxon>
        <taxon>Drosophilidae</taxon>
        <taxon>Drosophila</taxon>
        <taxon>Sophophora</taxon>
    </lineage>
</organism>
<accession>Q9VPH2</accession>
<accession>Q9U9Q5</accession>
<feature type="chain" id="PRO_0000046772" description="DNA primase large subunit">
    <location>
        <begin position="1"/>
        <end position="533"/>
    </location>
</feature>
<feature type="region of interest" description="Disordered" evidence="4">
    <location>
        <begin position="466"/>
        <end position="492"/>
    </location>
</feature>
<feature type="compositionally biased region" description="Basic and acidic residues" evidence="4">
    <location>
        <begin position="480"/>
        <end position="490"/>
    </location>
</feature>
<feature type="binding site" evidence="3">
    <location>
        <position position="298"/>
    </location>
    <ligand>
        <name>[4Fe-4S] cluster</name>
        <dbReference type="ChEBI" id="CHEBI:49883"/>
    </ligand>
</feature>
<feature type="binding site" evidence="3">
    <location>
        <position position="377"/>
    </location>
    <ligand>
        <name>[4Fe-4S] cluster</name>
        <dbReference type="ChEBI" id="CHEBI:49883"/>
    </ligand>
</feature>
<feature type="binding site" evidence="3">
    <location>
        <position position="393"/>
    </location>
    <ligand>
        <name>[4Fe-4S] cluster</name>
        <dbReference type="ChEBI" id="CHEBI:49883"/>
    </ligand>
</feature>
<feature type="binding site" evidence="3">
    <location>
        <position position="433"/>
    </location>
    <ligand>
        <name>[4Fe-4S] cluster</name>
        <dbReference type="ChEBI" id="CHEBI:49883"/>
    </ligand>
</feature>
<feature type="mutagenesis site" description="In DNApol-alpha60-T2; pupal lethal." evidence="6">
    <original>E</original>
    <variation>K</variation>
    <location>
        <position position="136"/>
    </location>
</feature>
<feature type="sequence conflict" description="In Ref. 4; AAD46835." evidence="13" ref="4">
    <original>Y</original>
    <variation>F</variation>
    <location>
        <position position="142"/>
    </location>
</feature>
<feature type="sequence conflict" description="In Ref. 4; AAD46835." evidence="13" ref="4">
    <original>S</original>
    <variation>G</variation>
    <location>
        <position position="149"/>
    </location>
</feature>
<sequence>MEFGLKKRARHEVKVEVASLETKYPHNVMLYHYPPTEDVHIDEFEELALERLRLLRVLDRASTRNLRVLSDEWKEIVSADLTREGLRSYLRLCSTGGSAKHEADIQTRRRDYLSHFILRLAYCRSEDLARWFVAREMELFRYKFAALSSFEVKQFLEANGFEIHPLTEAQKDEVKDGLYESTVGQSVAKIELLDFYKVPFTQVLDLVRGRRCFLKAGYAYVNTHDLVSLVGTKQQDEIEQGLQAAKTMVEDVEADERISRTLKALHNSYTGRDYTVCRDAAVPIESLDQLSKTSMPLCMRMCHEHIRANHHIKHSGRMQYGLFLKGIGVALEDSLRFWREEFTKKMDADKFTRSYEYNIYHNYGKKGSMVNYTPYSCAKIIKDVAGPGDCHGCPYKNMDQGSLKTKLSSYGLSASAIDEVMFFVSRGHYQIGCGKYFQLTHNSPVEPSINHPNNYFEESQIAMGNRQKRANGSAPPKARIRPDIKGHGDRSMLMGDDDDELWRIAETQERIMQSQKDISEAFNDDLDLTQIDY</sequence>
<protein>
    <recommendedName>
        <fullName evidence="13">DNA primase large subunit</fullName>
    </recommendedName>
    <alternativeName>
        <fullName evidence="12">DNA polymerase subunit beta</fullName>
    </alternativeName>
    <alternativeName>
        <fullName evidence="11">Suppressor of fat facets 240</fullName>
    </alternativeName>
</protein>